<name>FIXB_ECOK1</name>
<proteinExistence type="inferred from homology"/>
<dbReference type="EMBL" id="CP000468">
    <property type="protein sequence ID" value="ABI99531.1"/>
    <property type="molecule type" value="Genomic_DNA"/>
</dbReference>
<dbReference type="RefSeq" id="WP_001091524.1">
    <property type="nucleotide sequence ID" value="NZ_CADILS010000013.1"/>
</dbReference>
<dbReference type="SMR" id="A1A792"/>
<dbReference type="KEGG" id="ecv:APECO1_1939"/>
<dbReference type="HOGENOM" id="CLU_034178_0_1_6"/>
<dbReference type="UniPathway" id="UPA00117"/>
<dbReference type="Proteomes" id="UP000008216">
    <property type="component" value="Chromosome"/>
</dbReference>
<dbReference type="GO" id="GO:0009055">
    <property type="term" value="F:electron transfer activity"/>
    <property type="evidence" value="ECO:0007669"/>
    <property type="project" value="InterPro"/>
</dbReference>
<dbReference type="GO" id="GO:0050660">
    <property type="term" value="F:flavin adenine dinucleotide binding"/>
    <property type="evidence" value="ECO:0007669"/>
    <property type="project" value="InterPro"/>
</dbReference>
<dbReference type="GO" id="GO:0009437">
    <property type="term" value="P:carnitine metabolic process"/>
    <property type="evidence" value="ECO:0007669"/>
    <property type="project" value="UniProtKB-UniRule"/>
</dbReference>
<dbReference type="GO" id="GO:0033539">
    <property type="term" value="P:fatty acid beta-oxidation using acyl-CoA dehydrogenase"/>
    <property type="evidence" value="ECO:0007669"/>
    <property type="project" value="TreeGrafter"/>
</dbReference>
<dbReference type="FunFam" id="3.40.50.1220:FF:000004">
    <property type="entry name" value="Electron transfer flavoprotein"/>
    <property type="match status" value="1"/>
</dbReference>
<dbReference type="FunFam" id="3.40.50.620:FF:000067">
    <property type="entry name" value="Protein FixB"/>
    <property type="match status" value="1"/>
</dbReference>
<dbReference type="Gene3D" id="3.40.50.620">
    <property type="entry name" value="HUPs"/>
    <property type="match status" value="1"/>
</dbReference>
<dbReference type="Gene3D" id="3.40.50.1220">
    <property type="entry name" value="TPP-binding domain"/>
    <property type="match status" value="1"/>
</dbReference>
<dbReference type="HAMAP" id="MF_01056">
    <property type="entry name" value="FixB"/>
    <property type="match status" value="1"/>
</dbReference>
<dbReference type="InterPro" id="IPR029035">
    <property type="entry name" value="DHS-like_NAD/FAD-binding_dom"/>
</dbReference>
<dbReference type="InterPro" id="IPR014730">
    <property type="entry name" value="ETF_a/b_N"/>
</dbReference>
<dbReference type="InterPro" id="IPR001308">
    <property type="entry name" value="ETF_a/FixB"/>
</dbReference>
<dbReference type="InterPro" id="IPR014731">
    <property type="entry name" value="ETF_asu_C"/>
</dbReference>
<dbReference type="InterPro" id="IPR018206">
    <property type="entry name" value="ETF_asu_C_CS"/>
</dbReference>
<dbReference type="InterPro" id="IPR023461">
    <property type="entry name" value="FixB"/>
</dbReference>
<dbReference type="InterPro" id="IPR014729">
    <property type="entry name" value="Rossmann-like_a/b/a_fold"/>
</dbReference>
<dbReference type="NCBIfam" id="NF002889">
    <property type="entry name" value="PRK03363.1"/>
    <property type="match status" value="1"/>
</dbReference>
<dbReference type="PANTHER" id="PTHR43153">
    <property type="entry name" value="ELECTRON TRANSFER FLAVOPROTEIN ALPHA"/>
    <property type="match status" value="1"/>
</dbReference>
<dbReference type="PANTHER" id="PTHR43153:SF5">
    <property type="entry name" value="PROTEIN FIXB-RELATED"/>
    <property type="match status" value="1"/>
</dbReference>
<dbReference type="Pfam" id="PF01012">
    <property type="entry name" value="ETF"/>
    <property type="match status" value="1"/>
</dbReference>
<dbReference type="Pfam" id="PF00766">
    <property type="entry name" value="ETF_alpha"/>
    <property type="match status" value="1"/>
</dbReference>
<dbReference type="PIRSF" id="PIRSF000089">
    <property type="entry name" value="Electra_flavoP_a"/>
    <property type="match status" value="1"/>
</dbReference>
<dbReference type="SMART" id="SM00893">
    <property type="entry name" value="ETF"/>
    <property type="match status" value="1"/>
</dbReference>
<dbReference type="SUPFAM" id="SSF52402">
    <property type="entry name" value="Adenine nucleotide alpha hydrolases-like"/>
    <property type="match status" value="1"/>
</dbReference>
<dbReference type="SUPFAM" id="SSF52467">
    <property type="entry name" value="DHS-like NAD/FAD-binding domain"/>
    <property type="match status" value="1"/>
</dbReference>
<dbReference type="PROSITE" id="PS00696">
    <property type="entry name" value="ETF_ALPHA"/>
    <property type="match status" value="1"/>
</dbReference>
<organism>
    <name type="scientific">Escherichia coli O1:K1 / APEC</name>
    <dbReference type="NCBI Taxonomy" id="405955"/>
    <lineage>
        <taxon>Bacteria</taxon>
        <taxon>Pseudomonadati</taxon>
        <taxon>Pseudomonadota</taxon>
        <taxon>Gammaproteobacteria</taxon>
        <taxon>Enterobacterales</taxon>
        <taxon>Enterobacteriaceae</taxon>
        <taxon>Escherichia</taxon>
    </lineage>
</organism>
<feature type="chain" id="PRO_0000300964" description="Protein FixB">
    <location>
        <begin position="1"/>
        <end position="313"/>
    </location>
</feature>
<feature type="binding site" evidence="1">
    <location>
        <begin position="255"/>
        <end position="283"/>
    </location>
    <ligand>
        <name>FAD</name>
        <dbReference type="ChEBI" id="CHEBI:57692"/>
    </ligand>
</feature>
<protein>
    <recommendedName>
        <fullName evidence="1">Protein FixB</fullName>
    </recommendedName>
</protein>
<keyword id="KW-0249">Electron transport</keyword>
<keyword id="KW-0274">FAD</keyword>
<keyword id="KW-0285">Flavoprotein</keyword>
<keyword id="KW-1185">Reference proteome</keyword>
<keyword id="KW-0813">Transport</keyword>
<sequence length="313" mass="33514">MNTFSQVWVFSDTPSRLPELMNGAQALANQINTFVLNDADGTQAIQLGANHVWKLSGKPDERMIEDYAGVMADTIRQHGADGLVLLPNTRRGKLLAAKLGYRLNAAVSNDASAVSVQDGKATVKHMVYGGLAIGEERIATPYAVLTISSGTFDAAQPDASRTGETHTVEWQAPAVAITRTATQARQSNSVDLDKARLVVSVGRGIGSKENIALAEQLCKAIGAELACSRPVAENEKWMEHERYVGISNLMLKPELYLAVGISGQIQHMVGANASQTIFAINKDKNAPIFQYADYGIVGDAVKILPALTVALAR</sequence>
<accession>A1A792</accession>
<comment type="function">
    <text evidence="1">Required for anaerobic carnitine reduction. May bring reductant to CaiA.</text>
</comment>
<comment type="pathway">
    <text evidence="1">Amine and polyamine metabolism; carnitine metabolism.</text>
</comment>
<comment type="subunit">
    <text evidence="1">Heterodimer of FixA and FixB.</text>
</comment>
<comment type="similarity">
    <text evidence="1">Belongs to the ETF alpha-subunit/FixB family.</text>
</comment>
<reference key="1">
    <citation type="journal article" date="2007" name="J. Bacteriol.">
        <title>The genome sequence of avian pathogenic Escherichia coli strain O1:K1:H7 shares strong similarities with human extraintestinal pathogenic E. coli genomes.</title>
        <authorList>
            <person name="Johnson T.J."/>
            <person name="Kariyawasam S."/>
            <person name="Wannemuehler Y."/>
            <person name="Mangiamele P."/>
            <person name="Johnson S.J."/>
            <person name="Doetkott C."/>
            <person name="Skyberg J.A."/>
            <person name="Lynne A.M."/>
            <person name="Johnson J.R."/>
            <person name="Nolan L.K."/>
        </authorList>
    </citation>
    <scope>NUCLEOTIDE SEQUENCE [LARGE SCALE GENOMIC DNA]</scope>
</reference>
<evidence type="ECO:0000255" key="1">
    <source>
        <dbReference type="HAMAP-Rule" id="MF_01056"/>
    </source>
</evidence>
<gene>
    <name evidence="1" type="primary">fixB</name>
    <name type="ordered locus">Ecok1_00380</name>
    <name type="ORF">APECO1_1939</name>
</gene>